<protein>
    <recommendedName>
        <fullName evidence="1">Aspartyl/glutamyl-tRNA(Asn/Gln) amidotransferase subunit B</fullName>
        <shortName evidence="1">Asp/Glu-ADT subunit B</shortName>
        <ecNumber evidence="1">6.3.5.-</ecNumber>
    </recommendedName>
</protein>
<gene>
    <name evidence="1" type="primary">gatB</name>
    <name type="ordered locus">Tlet_0843</name>
</gene>
<sequence>MSFKTIVGLEIHVQLMTKTKAFCSCRADVFDLPPNTAICPVCTGQPGALPTVNSTMIDYAIKIALALNCNIHEYSRFDRKNYFYPDLPKGYQITQYFYPIATSGYMDIDVDGQTKRIRIRRLHIEEDAGKLIHEGDSITQAQYSLVDMNRCGVPLVEIVTEPDLSSPKEARIFVEKLRSILRYLEVSSGDMEKGALRCDANISIYDESAHLQSNRVEVKNMNSFRFIEKALEYEQQRIIEALKNNEDVEKETRGWDIATKMTVSMRGKEEESDYRYFPEPDIPPVIVPVERIEEIKRSLVELPDEKIERFVSVYGIPKYDATVLAMNKEIADFYEACVREIDKPKEISNWIMTEMLREMKSLESENITITPAHLCELFRLMEKGEISMKIAKEVFPTVFRTGKMPGEIIKERGLKQISDENLLENIVKKVLEDNPKAVEQYKSGKTGVIGFFVGQVMKETKGAANPQVVNKIIKQILG</sequence>
<accession>A8F5H5</accession>
<reference key="1">
    <citation type="submission" date="2007-08" db="EMBL/GenBank/DDBJ databases">
        <title>Complete sequence of Thermotoga lettingae TMO.</title>
        <authorList>
            <consortium name="US DOE Joint Genome Institute"/>
            <person name="Copeland A."/>
            <person name="Lucas S."/>
            <person name="Lapidus A."/>
            <person name="Barry K."/>
            <person name="Glavina del Rio T."/>
            <person name="Dalin E."/>
            <person name="Tice H."/>
            <person name="Pitluck S."/>
            <person name="Foster B."/>
            <person name="Bruce D."/>
            <person name="Schmutz J."/>
            <person name="Larimer F."/>
            <person name="Land M."/>
            <person name="Hauser L."/>
            <person name="Kyrpides N."/>
            <person name="Mikhailova N."/>
            <person name="Nelson K."/>
            <person name="Gogarten J.P."/>
            <person name="Noll K."/>
            <person name="Richardson P."/>
        </authorList>
    </citation>
    <scope>NUCLEOTIDE SEQUENCE [LARGE SCALE GENOMIC DNA]</scope>
    <source>
        <strain>ATCC BAA-301 / DSM 14385 / NBRC 107922 / TMO</strain>
    </source>
</reference>
<organism>
    <name type="scientific">Pseudothermotoga lettingae (strain ATCC BAA-301 / DSM 14385 / NBRC 107922 / TMO)</name>
    <name type="common">Thermotoga lettingae</name>
    <dbReference type="NCBI Taxonomy" id="416591"/>
    <lineage>
        <taxon>Bacteria</taxon>
        <taxon>Thermotogati</taxon>
        <taxon>Thermotogota</taxon>
        <taxon>Thermotogae</taxon>
        <taxon>Thermotogales</taxon>
        <taxon>Thermotogaceae</taxon>
        <taxon>Pseudothermotoga</taxon>
    </lineage>
</organism>
<name>GATB_PSELT</name>
<comment type="function">
    <text evidence="1">Allows the formation of correctly charged Asn-tRNA(Asn) or Gln-tRNA(Gln) through the transamidation of misacylated Asp-tRNA(Asn) or Glu-tRNA(Gln) in organisms which lack either or both of asparaginyl-tRNA or glutaminyl-tRNA synthetases. The reaction takes place in the presence of glutamine and ATP through an activated phospho-Asp-tRNA(Asn) or phospho-Glu-tRNA(Gln).</text>
</comment>
<comment type="catalytic activity">
    <reaction evidence="1">
        <text>L-glutamyl-tRNA(Gln) + L-glutamine + ATP + H2O = L-glutaminyl-tRNA(Gln) + L-glutamate + ADP + phosphate + H(+)</text>
        <dbReference type="Rhea" id="RHEA:17521"/>
        <dbReference type="Rhea" id="RHEA-COMP:9681"/>
        <dbReference type="Rhea" id="RHEA-COMP:9684"/>
        <dbReference type="ChEBI" id="CHEBI:15377"/>
        <dbReference type="ChEBI" id="CHEBI:15378"/>
        <dbReference type="ChEBI" id="CHEBI:29985"/>
        <dbReference type="ChEBI" id="CHEBI:30616"/>
        <dbReference type="ChEBI" id="CHEBI:43474"/>
        <dbReference type="ChEBI" id="CHEBI:58359"/>
        <dbReference type="ChEBI" id="CHEBI:78520"/>
        <dbReference type="ChEBI" id="CHEBI:78521"/>
        <dbReference type="ChEBI" id="CHEBI:456216"/>
    </reaction>
</comment>
<comment type="catalytic activity">
    <reaction evidence="1">
        <text>L-aspartyl-tRNA(Asn) + L-glutamine + ATP + H2O = L-asparaginyl-tRNA(Asn) + L-glutamate + ADP + phosphate + 2 H(+)</text>
        <dbReference type="Rhea" id="RHEA:14513"/>
        <dbReference type="Rhea" id="RHEA-COMP:9674"/>
        <dbReference type="Rhea" id="RHEA-COMP:9677"/>
        <dbReference type="ChEBI" id="CHEBI:15377"/>
        <dbReference type="ChEBI" id="CHEBI:15378"/>
        <dbReference type="ChEBI" id="CHEBI:29985"/>
        <dbReference type="ChEBI" id="CHEBI:30616"/>
        <dbReference type="ChEBI" id="CHEBI:43474"/>
        <dbReference type="ChEBI" id="CHEBI:58359"/>
        <dbReference type="ChEBI" id="CHEBI:78515"/>
        <dbReference type="ChEBI" id="CHEBI:78516"/>
        <dbReference type="ChEBI" id="CHEBI:456216"/>
    </reaction>
</comment>
<comment type="subunit">
    <text evidence="1">Heterotrimer of A, B and C subunits.</text>
</comment>
<comment type="similarity">
    <text evidence="1">Belongs to the GatB/GatE family. GatB subfamily.</text>
</comment>
<evidence type="ECO:0000255" key="1">
    <source>
        <dbReference type="HAMAP-Rule" id="MF_00121"/>
    </source>
</evidence>
<keyword id="KW-0067">ATP-binding</keyword>
<keyword id="KW-0436">Ligase</keyword>
<keyword id="KW-0547">Nucleotide-binding</keyword>
<keyword id="KW-0648">Protein biosynthesis</keyword>
<keyword id="KW-1185">Reference proteome</keyword>
<dbReference type="EC" id="6.3.5.-" evidence="1"/>
<dbReference type="EMBL" id="CP000812">
    <property type="protein sequence ID" value="ABV33409.1"/>
    <property type="molecule type" value="Genomic_DNA"/>
</dbReference>
<dbReference type="RefSeq" id="WP_012002890.1">
    <property type="nucleotide sequence ID" value="NZ_BSDV01000001.1"/>
</dbReference>
<dbReference type="SMR" id="A8F5H5"/>
<dbReference type="STRING" id="416591.Tlet_0843"/>
<dbReference type="KEGG" id="tle:Tlet_0843"/>
<dbReference type="eggNOG" id="COG0064">
    <property type="taxonomic scope" value="Bacteria"/>
</dbReference>
<dbReference type="HOGENOM" id="CLU_019240_0_0_0"/>
<dbReference type="OrthoDB" id="9804078at2"/>
<dbReference type="Proteomes" id="UP000002016">
    <property type="component" value="Chromosome"/>
</dbReference>
<dbReference type="GO" id="GO:0050566">
    <property type="term" value="F:asparaginyl-tRNA synthase (glutamine-hydrolyzing) activity"/>
    <property type="evidence" value="ECO:0007669"/>
    <property type="project" value="RHEA"/>
</dbReference>
<dbReference type="GO" id="GO:0005524">
    <property type="term" value="F:ATP binding"/>
    <property type="evidence" value="ECO:0007669"/>
    <property type="project" value="UniProtKB-KW"/>
</dbReference>
<dbReference type="GO" id="GO:0050567">
    <property type="term" value="F:glutaminyl-tRNA synthase (glutamine-hydrolyzing) activity"/>
    <property type="evidence" value="ECO:0007669"/>
    <property type="project" value="UniProtKB-UniRule"/>
</dbReference>
<dbReference type="GO" id="GO:0070681">
    <property type="term" value="P:glutaminyl-tRNAGln biosynthesis via transamidation"/>
    <property type="evidence" value="ECO:0007669"/>
    <property type="project" value="TreeGrafter"/>
</dbReference>
<dbReference type="GO" id="GO:0006412">
    <property type="term" value="P:translation"/>
    <property type="evidence" value="ECO:0007669"/>
    <property type="project" value="UniProtKB-UniRule"/>
</dbReference>
<dbReference type="FunFam" id="1.10.10.410:FF:000001">
    <property type="entry name" value="Aspartyl/glutamyl-tRNA(Asn/Gln) amidotransferase subunit B"/>
    <property type="match status" value="1"/>
</dbReference>
<dbReference type="FunFam" id="1.10.150.380:FF:000001">
    <property type="entry name" value="Aspartyl/glutamyl-tRNA(Asn/Gln) amidotransferase subunit B"/>
    <property type="match status" value="1"/>
</dbReference>
<dbReference type="Gene3D" id="1.10.10.410">
    <property type="match status" value="1"/>
</dbReference>
<dbReference type="Gene3D" id="1.10.150.380">
    <property type="entry name" value="GatB domain, N-terminal subdomain"/>
    <property type="match status" value="1"/>
</dbReference>
<dbReference type="HAMAP" id="MF_00121">
    <property type="entry name" value="GatB"/>
    <property type="match status" value="1"/>
</dbReference>
<dbReference type="InterPro" id="IPR017959">
    <property type="entry name" value="Asn/Gln-tRNA_amidoTrfase_suB/E"/>
</dbReference>
<dbReference type="InterPro" id="IPR006075">
    <property type="entry name" value="Asn/Gln-tRNA_Trfase_suB/E_cat"/>
</dbReference>
<dbReference type="InterPro" id="IPR018027">
    <property type="entry name" value="Asn/Gln_amidotransferase"/>
</dbReference>
<dbReference type="InterPro" id="IPR003789">
    <property type="entry name" value="Asn/Gln_tRNA_amidoTrase-B-like"/>
</dbReference>
<dbReference type="InterPro" id="IPR004413">
    <property type="entry name" value="GatB"/>
</dbReference>
<dbReference type="InterPro" id="IPR042114">
    <property type="entry name" value="GatB_C_1"/>
</dbReference>
<dbReference type="InterPro" id="IPR023168">
    <property type="entry name" value="GatB_Yqey_C_2"/>
</dbReference>
<dbReference type="InterPro" id="IPR017958">
    <property type="entry name" value="Gln-tRNA_amidoTrfase_suB_CS"/>
</dbReference>
<dbReference type="InterPro" id="IPR014746">
    <property type="entry name" value="Gln_synth/guanido_kin_cat_dom"/>
</dbReference>
<dbReference type="NCBIfam" id="TIGR00133">
    <property type="entry name" value="gatB"/>
    <property type="match status" value="1"/>
</dbReference>
<dbReference type="NCBIfam" id="NF004012">
    <property type="entry name" value="PRK05477.1-2"/>
    <property type="match status" value="1"/>
</dbReference>
<dbReference type="NCBIfam" id="NF004014">
    <property type="entry name" value="PRK05477.1-4"/>
    <property type="match status" value="1"/>
</dbReference>
<dbReference type="PANTHER" id="PTHR11659">
    <property type="entry name" value="GLUTAMYL-TRNA GLN AMIDOTRANSFERASE SUBUNIT B MITOCHONDRIAL AND PROKARYOTIC PET112-RELATED"/>
    <property type="match status" value="1"/>
</dbReference>
<dbReference type="PANTHER" id="PTHR11659:SF0">
    <property type="entry name" value="GLUTAMYL-TRNA(GLN) AMIDOTRANSFERASE SUBUNIT B, MITOCHONDRIAL"/>
    <property type="match status" value="1"/>
</dbReference>
<dbReference type="Pfam" id="PF02934">
    <property type="entry name" value="GatB_N"/>
    <property type="match status" value="1"/>
</dbReference>
<dbReference type="Pfam" id="PF02637">
    <property type="entry name" value="GatB_Yqey"/>
    <property type="match status" value="1"/>
</dbReference>
<dbReference type="SMART" id="SM00845">
    <property type="entry name" value="GatB_Yqey"/>
    <property type="match status" value="1"/>
</dbReference>
<dbReference type="SUPFAM" id="SSF89095">
    <property type="entry name" value="GatB/YqeY motif"/>
    <property type="match status" value="1"/>
</dbReference>
<dbReference type="SUPFAM" id="SSF55931">
    <property type="entry name" value="Glutamine synthetase/guanido kinase"/>
    <property type="match status" value="1"/>
</dbReference>
<dbReference type="PROSITE" id="PS01234">
    <property type="entry name" value="GATB"/>
    <property type="match status" value="1"/>
</dbReference>
<feature type="chain" id="PRO_1000071377" description="Aspartyl/glutamyl-tRNA(Asn/Gln) amidotransferase subunit B">
    <location>
        <begin position="1"/>
        <end position="478"/>
    </location>
</feature>
<proteinExistence type="inferred from homology"/>